<keyword id="KW-1185">Reference proteome</keyword>
<evidence type="ECO:0000256" key="1">
    <source>
        <dbReference type="SAM" id="MobiDB-lite"/>
    </source>
</evidence>
<feature type="chain" id="PRO_0000271108" description="Proline-rich protein 34">
    <location>
        <begin position="1"/>
        <end position="138"/>
    </location>
</feature>
<feature type="region of interest" description="Disordered" evidence="1">
    <location>
        <begin position="22"/>
        <end position="55"/>
    </location>
</feature>
<feature type="region of interest" description="Disordered" evidence="1">
    <location>
        <begin position="81"/>
        <end position="107"/>
    </location>
</feature>
<feature type="compositionally biased region" description="Pro residues" evidence="1">
    <location>
        <begin position="22"/>
        <end position="37"/>
    </location>
</feature>
<feature type="sequence variant" id="VAR_061635" description="In dbSNP:rs12159707.">
    <original>P</original>
    <variation>L</variation>
    <location>
        <position position="28"/>
    </location>
</feature>
<feature type="sequence variant" id="VAR_061636" description="In dbSNP:rs59929908.">
    <original>Q</original>
    <variation>R</variation>
    <location>
        <position position="137"/>
    </location>
</feature>
<sequence length="138" mass="14718">MPASATAAWHCPPLCLPPLPASAPTSPPNPATRPAPGPGRRARCPQSAHPAPTRGALTFWAPGSWPRVLLVPRSPGPVLRAPRLPHPAARARRRAWHGARLPGSPARAGRTFQRGLVSNSWAHAIFLPRPPNVLELQV</sequence>
<proteinExistence type="evidence at protein level"/>
<organism>
    <name type="scientific">Homo sapiens</name>
    <name type="common">Human</name>
    <dbReference type="NCBI Taxonomy" id="9606"/>
    <lineage>
        <taxon>Eukaryota</taxon>
        <taxon>Metazoa</taxon>
        <taxon>Chordata</taxon>
        <taxon>Craniata</taxon>
        <taxon>Vertebrata</taxon>
        <taxon>Euteleostomi</taxon>
        <taxon>Mammalia</taxon>
        <taxon>Eutheria</taxon>
        <taxon>Euarchontoglires</taxon>
        <taxon>Primates</taxon>
        <taxon>Haplorrhini</taxon>
        <taxon>Catarrhini</taxon>
        <taxon>Hominidae</taxon>
        <taxon>Homo</taxon>
    </lineage>
</organism>
<comment type="interaction">
    <interactant intactId="EBI-11959565">
        <id>Q9NV39</id>
    </interactant>
    <interactant intactId="EBI-747185">
        <id>O95817</id>
        <label>BAG3</label>
    </interactant>
    <organismsDiffer>false</organismsDiffer>
    <experiments>3</experiments>
</comment>
<comment type="interaction">
    <interactant intactId="EBI-11959565">
        <id>Q9NV39</id>
    </interactant>
    <interactant intactId="EBI-11524452">
        <id>Q8N9N5-2</id>
        <label>BANP</label>
    </interactant>
    <organismsDiffer>false</organismsDiffer>
    <experiments>3</experiments>
</comment>
<comment type="interaction">
    <interactant intactId="EBI-11959565">
        <id>Q9NV39</id>
    </interactant>
    <interactant intactId="EBI-11983447">
        <id>Q8N9W6-4</id>
        <label>BOLL</label>
    </interactant>
    <organismsDiffer>false</organismsDiffer>
    <experiments>3</experiments>
</comment>
<comment type="interaction">
    <interactant intactId="EBI-11959565">
        <id>Q9NV39</id>
    </interactant>
    <interactant intactId="EBI-3867333">
        <id>A8MQ03</id>
        <label>CYSRT1</label>
    </interactant>
    <organismsDiffer>false</organismsDiffer>
    <experiments>3</experiments>
</comment>
<comment type="interaction">
    <interactant intactId="EBI-11959565">
        <id>Q9NV39</id>
    </interactant>
    <interactant intactId="EBI-724310">
        <id>Q15038</id>
        <label>DAZAP2</label>
    </interactant>
    <organismsDiffer>false</organismsDiffer>
    <experiments>3</experiments>
</comment>
<comment type="interaction">
    <interactant intactId="EBI-11959565">
        <id>Q9NV39</id>
    </interactant>
    <interactant intactId="EBI-740376">
        <id>Q86UW9</id>
        <label>DTX2</label>
    </interactant>
    <organismsDiffer>false</organismsDiffer>
    <experiments>3</experiments>
</comment>
<comment type="interaction">
    <interactant intactId="EBI-11959565">
        <id>Q9NV39</id>
    </interactant>
    <interactant intactId="EBI-352986">
        <id>P52597</id>
        <label>HNRNPF</label>
    </interactant>
    <organismsDiffer>false</organismsDiffer>
    <experiments>3</experiments>
</comment>
<comment type="interaction">
    <interactant intactId="EBI-11959565">
        <id>Q9NV39</id>
    </interactant>
    <interactant intactId="EBI-8638439">
        <id>Q8IYA8</id>
        <label>IHO1</label>
    </interactant>
    <organismsDiffer>false</organismsDiffer>
    <experiments>3</experiments>
</comment>
<comment type="interaction">
    <interactant intactId="EBI-11959565">
        <id>Q9NV39</id>
    </interactant>
    <interactant intactId="EBI-751260">
        <id>Q9BYR7</id>
        <label>KRTAP3-2</label>
    </interactant>
    <organismsDiffer>false</organismsDiffer>
    <experiments>3</experiments>
</comment>
<comment type="interaction">
    <interactant intactId="EBI-11959565">
        <id>Q9NV39</id>
    </interactant>
    <interactant intactId="EBI-724076">
        <id>Q99750</id>
        <label>MDFI</label>
    </interactant>
    <organismsDiffer>false</organismsDiffer>
    <experiments>3</experiments>
</comment>
<comment type="interaction">
    <interactant intactId="EBI-11959565">
        <id>Q9NV39</id>
    </interactant>
    <interactant intactId="EBI-12754095">
        <id>P86480</id>
        <label>PRR20D</label>
    </interactant>
    <organismsDiffer>false</organismsDiffer>
    <experiments>6</experiments>
</comment>
<comment type="interaction">
    <interactant intactId="EBI-11959565">
        <id>Q9NV39</id>
    </interactant>
    <interactant intactId="EBI-372094">
        <id>Q9BQY4</id>
        <label>RHOXF2</label>
    </interactant>
    <organismsDiffer>false</organismsDiffer>
    <experiments>3</experiments>
</comment>
<comment type="interaction">
    <interactant intactId="EBI-11959565">
        <id>Q9NV39</id>
    </interactant>
    <interactant intactId="EBI-742740">
        <id>Q96BR9</id>
        <label>ZBTB8A</label>
    </interactant>
    <organismsDiffer>false</organismsDiffer>
    <experiments>3</experiments>
</comment>
<accession>Q9NV39</accession>
<accession>B0QZ24</accession>
<dbReference type="EMBL" id="AK001807">
    <property type="protein sequence ID" value="BAA91920.1"/>
    <property type="molecule type" value="mRNA"/>
</dbReference>
<dbReference type="EMBL" id="AL121672">
    <property type="status" value="NOT_ANNOTATED_CDS"/>
    <property type="molecule type" value="Genomic_DNA"/>
</dbReference>
<dbReference type="EMBL" id="CH471138">
    <property type="protein sequence ID" value="EAW73396.1"/>
    <property type="molecule type" value="Genomic_DNA"/>
</dbReference>
<dbReference type="RefSeq" id="NP_060750.1">
    <property type="nucleotide sequence ID" value="NM_018280.2"/>
</dbReference>
<dbReference type="BioGRID" id="120556">
    <property type="interactions" value="22"/>
</dbReference>
<dbReference type="FunCoup" id="Q9NV39">
    <property type="interactions" value="2"/>
</dbReference>
<dbReference type="IntAct" id="Q9NV39">
    <property type="interactions" value="15"/>
</dbReference>
<dbReference type="BioMuta" id="PRR34"/>
<dbReference type="PaxDb" id="9606-ENSP00000379329"/>
<dbReference type="DNASU" id="55267"/>
<dbReference type="UCSC" id="uc003bgq.2">
    <property type="organism name" value="human"/>
</dbReference>
<dbReference type="AGR" id="HGNC:25606"/>
<dbReference type="GeneCards" id="PRR34"/>
<dbReference type="HGNC" id="HGNC:25606">
    <property type="gene designation" value="PRR34"/>
</dbReference>
<dbReference type="neXtProt" id="NX_Q9NV39"/>
<dbReference type="PharmGKB" id="PA145149369"/>
<dbReference type="eggNOG" id="ENOG502TDME">
    <property type="taxonomic scope" value="Eukaryota"/>
</dbReference>
<dbReference type="HOGENOM" id="CLU_1975572_0_0_1"/>
<dbReference type="InParanoid" id="Q9NV39"/>
<dbReference type="PAN-GO" id="Q9NV39">
    <property type="GO annotations" value="0 GO annotations based on evolutionary models"/>
</dbReference>
<dbReference type="PhylomeDB" id="Q9NV39"/>
<dbReference type="TreeFam" id="TF341481"/>
<dbReference type="PathwayCommons" id="Q9NV39"/>
<dbReference type="SignaLink" id="Q9NV39"/>
<dbReference type="BioGRID-ORCS" id="55267">
    <property type="hits" value="11 hits in 1136 CRISPR screens"/>
</dbReference>
<dbReference type="GenomeRNAi" id="55267"/>
<dbReference type="Pharos" id="Q9NV39">
    <property type="development level" value="Tdark"/>
</dbReference>
<dbReference type="PRO" id="PR:Q9NV39"/>
<dbReference type="Proteomes" id="UP000005640">
    <property type="component" value="Unplaced"/>
</dbReference>
<dbReference type="RNAct" id="Q9NV39">
    <property type="molecule type" value="protein"/>
</dbReference>
<name>PRR34_HUMAN</name>
<reference key="1">
    <citation type="journal article" date="2004" name="Nat. Genet.">
        <title>Complete sequencing and characterization of 21,243 full-length human cDNAs.</title>
        <authorList>
            <person name="Ota T."/>
            <person name="Suzuki Y."/>
            <person name="Nishikawa T."/>
            <person name="Otsuki T."/>
            <person name="Sugiyama T."/>
            <person name="Irie R."/>
            <person name="Wakamatsu A."/>
            <person name="Hayashi K."/>
            <person name="Sato H."/>
            <person name="Nagai K."/>
            <person name="Kimura K."/>
            <person name="Makita H."/>
            <person name="Sekine M."/>
            <person name="Obayashi M."/>
            <person name="Nishi T."/>
            <person name="Shibahara T."/>
            <person name="Tanaka T."/>
            <person name="Ishii S."/>
            <person name="Yamamoto J."/>
            <person name="Saito K."/>
            <person name="Kawai Y."/>
            <person name="Isono Y."/>
            <person name="Nakamura Y."/>
            <person name="Nagahari K."/>
            <person name="Murakami K."/>
            <person name="Yasuda T."/>
            <person name="Iwayanagi T."/>
            <person name="Wagatsuma M."/>
            <person name="Shiratori A."/>
            <person name="Sudo H."/>
            <person name="Hosoiri T."/>
            <person name="Kaku Y."/>
            <person name="Kodaira H."/>
            <person name="Kondo H."/>
            <person name="Sugawara M."/>
            <person name="Takahashi M."/>
            <person name="Kanda K."/>
            <person name="Yokoi T."/>
            <person name="Furuya T."/>
            <person name="Kikkawa E."/>
            <person name="Omura Y."/>
            <person name="Abe K."/>
            <person name="Kamihara K."/>
            <person name="Katsuta N."/>
            <person name="Sato K."/>
            <person name="Tanikawa M."/>
            <person name="Yamazaki M."/>
            <person name="Ninomiya K."/>
            <person name="Ishibashi T."/>
            <person name="Yamashita H."/>
            <person name="Murakawa K."/>
            <person name="Fujimori K."/>
            <person name="Tanai H."/>
            <person name="Kimata M."/>
            <person name="Watanabe M."/>
            <person name="Hiraoka S."/>
            <person name="Chiba Y."/>
            <person name="Ishida S."/>
            <person name="Ono Y."/>
            <person name="Takiguchi S."/>
            <person name="Watanabe S."/>
            <person name="Yosida M."/>
            <person name="Hotuta T."/>
            <person name="Kusano J."/>
            <person name="Kanehori K."/>
            <person name="Takahashi-Fujii A."/>
            <person name="Hara H."/>
            <person name="Tanase T.-O."/>
            <person name="Nomura Y."/>
            <person name="Togiya S."/>
            <person name="Komai F."/>
            <person name="Hara R."/>
            <person name="Takeuchi K."/>
            <person name="Arita M."/>
            <person name="Imose N."/>
            <person name="Musashino K."/>
            <person name="Yuuki H."/>
            <person name="Oshima A."/>
            <person name="Sasaki N."/>
            <person name="Aotsuka S."/>
            <person name="Yoshikawa Y."/>
            <person name="Matsunawa H."/>
            <person name="Ichihara T."/>
            <person name="Shiohata N."/>
            <person name="Sano S."/>
            <person name="Moriya S."/>
            <person name="Momiyama H."/>
            <person name="Satoh N."/>
            <person name="Takami S."/>
            <person name="Terashima Y."/>
            <person name="Suzuki O."/>
            <person name="Nakagawa S."/>
            <person name="Senoh A."/>
            <person name="Mizoguchi H."/>
            <person name="Goto Y."/>
            <person name="Shimizu F."/>
            <person name="Wakebe H."/>
            <person name="Hishigaki H."/>
            <person name="Watanabe T."/>
            <person name="Sugiyama A."/>
            <person name="Takemoto M."/>
            <person name="Kawakami B."/>
            <person name="Yamazaki M."/>
            <person name="Watanabe K."/>
            <person name="Kumagai A."/>
            <person name="Itakura S."/>
            <person name="Fukuzumi Y."/>
            <person name="Fujimori Y."/>
            <person name="Komiyama M."/>
            <person name="Tashiro H."/>
            <person name="Tanigami A."/>
            <person name="Fujiwara T."/>
            <person name="Ono T."/>
            <person name="Yamada K."/>
            <person name="Fujii Y."/>
            <person name="Ozaki K."/>
            <person name="Hirao M."/>
            <person name="Ohmori Y."/>
            <person name="Kawabata A."/>
            <person name="Hikiji T."/>
            <person name="Kobatake N."/>
            <person name="Inagaki H."/>
            <person name="Ikema Y."/>
            <person name="Okamoto S."/>
            <person name="Okitani R."/>
            <person name="Kawakami T."/>
            <person name="Noguchi S."/>
            <person name="Itoh T."/>
            <person name="Shigeta K."/>
            <person name="Senba T."/>
            <person name="Matsumura K."/>
            <person name="Nakajima Y."/>
            <person name="Mizuno T."/>
            <person name="Morinaga M."/>
            <person name="Sasaki M."/>
            <person name="Togashi T."/>
            <person name="Oyama M."/>
            <person name="Hata H."/>
            <person name="Watanabe M."/>
            <person name="Komatsu T."/>
            <person name="Mizushima-Sugano J."/>
            <person name="Satoh T."/>
            <person name="Shirai Y."/>
            <person name="Takahashi Y."/>
            <person name="Nakagawa K."/>
            <person name="Okumura K."/>
            <person name="Nagase T."/>
            <person name="Nomura N."/>
            <person name="Kikuchi H."/>
            <person name="Masuho Y."/>
            <person name="Yamashita R."/>
            <person name="Nakai K."/>
            <person name="Yada T."/>
            <person name="Nakamura Y."/>
            <person name="Ohara O."/>
            <person name="Isogai T."/>
            <person name="Sugano S."/>
        </authorList>
    </citation>
    <scope>NUCLEOTIDE SEQUENCE [LARGE SCALE MRNA]</scope>
    <source>
        <tissue>Ovarian carcinoma</tissue>
    </source>
</reference>
<reference key="2">
    <citation type="journal article" date="1999" name="Nature">
        <title>The DNA sequence of human chromosome 22.</title>
        <authorList>
            <person name="Dunham I."/>
            <person name="Hunt A.R."/>
            <person name="Collins J.E."/>
            <person name="Bruskiewich R."/>
            <person name="Beare D.M."/>
            <person name="Clamp M."/>
            <person name="Smink L.J."/>
            <person name="Ainscough R."/>
            <person name="Almeida J.P."/>
            <person name="Babbage A.K."/>
            <person name="Bagguley C."/>
            <person name="Bailey J."/>
            <person name="Barlow K.F."/>
            <person name="Bates K.N."/>
            <person name="Beasley O.P."/>
            <person name="Bird C.P."/>
            <person name="Blakey S.E."/>
            <person name="Bridgeman A.M."/>
            <person name="Buck D."/>
            <person name="Burgess J."/>
            <person name="Burrill W.D."/>
            <person name="Burton J."/>
            <person name="Carder C."/>
            <person name="Carter N.P."/>
            <person name="Chen Y."/>
            <person name="Clark G."/>
            <person name="Clegg S.M."/>
            <person name="Cobley V.E."/>
            <person name="Cole C.G."/>
            <person name="Collier R.E."/>
            <person name="Connor R."/>
            <person name="Conroy D."/>
            <person name="Corby N.R."/>
            <person name="Coville G.J."/>
            <person name="Cox A.V."/>
            <person name="Davis J."/>
            <person name="Dawson E."/>
            <person name="Dhami P.D."/>
            <person name="Dockree C."/>
            <person name="Dodsworth S.J."/>
            <person name="Durbin R.M."/>
            <person name="Ellington A.G."/>
            <person name="Evans K.L."/>
            <person name="Fey J.M."/>
            <person name="Fleming K."/>
            <person name="French L."/>
            <person name="Garner A.A."/>
            <person name="Gilbert J.G.R."/>
            <person name="Goward M.E."/>
            <person name="Grafham D.V."/>
            <person name="Griffiths M.N.D."/>
            <person name="Hall C."/>
            <person name="Hall R.E."/>
            <person name="Hall-Tamlyn G."/>
            <person name="Heathcott R.W."/>
            <person name="Ho S."/>
            <person name="Holmes S."/>
            <person name="Hunt S.E."/>
            <person name="Jones M.C."/>
            <person name="Kershaw J."/>
            <person name="Kimberley A.M."/>
            <person name="King A."/>
            <person name="Laird G.K."/>
            <person name="Langford C.F."/>
            <person name="Leversha M.A."/>
            <person name="Lloyd C."/>
            <person name="Lloyd D.M."/>
            <person name="Martyn I.D."/>
            <person name="Mashreghi-Mohammadi M."/>
            <person name="Matthews L.H."/>
            <person name="Mccann O.T."/>
            <person name="Mcclay J."/>
            <person name="Mclaren S."/>
            <person name="McMurray A.A."/>
            <person name="Milne S.A."/>
            <person name="Mortimore B.J."/>
            <person name="Odell C.N."/>
            <person name="Pavitt R."/>
            <person name="Pearce A.V."/>
            <person name="Pearson D."/>
            <person name="Phillimore B.J.C.T."/>
            <person name="Phillips S.H."/>
            <person name="Plumb R.W."/>
            <person name="Ramsay H."/>
            <person name="Ramsey Y."/>
            <person name="Rogers L."/>
            <person name="Ross M.T."/>
            <person name="Scott C.E."/>
            <person name="Sehra H.K."/>
            <person name="Skuce C.D."/>
            <person name="Smalley S."/>
            <person name="Smith M.L."/>
            <person name="Soderlund C."/>
            <person name="Spragon L."/>
            <person name="Steward C.A."/>
            <person name="Sulston J.E."/>
            <person name="Swann R.M."/>
            <person name="Vaudin M."/>
            <person name="Wall M."/>
            <person name="Wallis J.M."/>
            <person name="Whiteley M.N."/>
            <person name="Willey D.L."/>
            <person name="Williams L."/>
            <person name="Williams S.A."/>
            <person name="Williamson H."/>
            <person name="Wilmer T.E."/>
            <person name="Wilming L."/>
            <person name="Wright C.L."/>
            <person name="Hubbard T."/>
            <person name="Bentley D.R."/>
            <person name="Beck S."/>
            <person name="Rogers J."/>
            <person name="Shimizu N."/>
            <person name="Minoshima S."/>
            <person name="Kawasaki K."/>
            <person name="Sasaki T."/>
            <person name="Asakawa S."/>
            <person name="Kudoh J."/>
            <person name="Shintani A."/>
            <person name="Shibuya K."/>
            <person name="Yoshizaki Y."/>
            <person name="Aoki N."/>
            <person name="Mitsuyama S."/>
            <person name="Roe B.A."/>
            <person name="Chen F."/>
            <person name="Chu L."/>
            <person name="Crabtree J."/>
            <person name="Deschamps S."/>
            <person name="Do A."/>
            <person name="Do T."/>
            <person name="Dorman A."/>
            <person name="Fang F."/>
            <person name="Fu Y."/>
            <person name="Hu P."/>
            <person name="Hua A."/>
            <person name="Kenton S."/>
            <person name="Lai H."/>
            <person name="Lao H.I."/>
            <person name="Lewis J."/>
            <person name="Lewis S."/>
            <person name="Lin S.-P."/>
            <person name="Loh P."/>
            <person name="Malaj E."/>
            <person name="Nguyen T."/>
            <person name="Pan H."/>
            <person name="Phan S."/>
            <person name="Qi S."/>
            <person name="Qian Y."/>
            <person name="Ray L."/>
            <person name="Ren Q."/>
            <person name="Shaull S."/>
            <person name="Sloan D."/>
            <person name="Song L."/>
            <person name="Wang Q."/>
            <person name="Wang Y."/>
            <person name="Wang Z."/>
            <person name="White J."/>
            <person name="Willingham D."/>
            <person name="Wu H."/>
            <person name="Yao Z."/>
            <person name="Zhan M."/>
            <person name="Zhang G."/>
            <person name="Chissoe S."/>
            <person name="Murray J."/>
            <person name="Miller N."/>
            <person name="Minx P."/>
            <person name="Fulton R."/>
            <person name="Johnson D."/>
            <person name="Bemis G."/>
            <person name="Bentley D."/>
            <person name="Bradshaw H."/>
            <person name="Bourne S."/>
            <person name="Cordes M."/>
            <person name="Du Z."/>
            <person name="Fulton L."/>
            <person name="Goela D."/>
            <person name="Graves T."/>
            <person name="Hawkins J."/>
            <person name="Hinds K."/>
            <person name="Kemp K."/>
            <person name="Latreille P."/>
            <person name="Layman D."/>
            <person name="Ozersky P."/>
            <person name="Rohlfing T."/>
            <person name="Scheet P."/>
            <person name="Walker C."/>
            <person name="Wamsley A."/>
            <person name="Wohldmann P."/>
            <person name="Pepin K."/>
            <person name="Nelson J."/>
            <person name="Korf I."/>
            <person name="Bedell J.A."/>
            <person name="Hillier L.W."/>
            <person name="Mardis E."/>
            <person name="Waterston R."/>
            <person name="Wilson R."/>
            <person name="Emanuel B.S."/>
            <person name="Shaikh T."/>
            <person name="Kurahashi H."/>
            <person name="Saitta S."/>
            <person name="Budarf M.L."/>
            <person name="McDermid H.E."/>
            <person name="Johnson A."/>
            <person name="Wong A.C.C."/>
            <person name="Morrow B.E."/>
            <person name="Edelmann L."/>
            <person name="Kim U.J."/>
            <person name="Shizuya H."/>
            <person name="Simon M.I."/>
            <person name="Dumanski J.P."/>
            <person name="Peyrard M."/>
            <person name="Kedra D."/>
            <person name="Seroussi E."/>
            <person name="Fransson I."/>
            <person name="Tapia I."/>
            <person name="Bruder C.E."/>
            <person name="O'Brien K.P."/>
            <person name="Wilkinson P."/>
            <person name="Bodenteich A."/>
            <person name="Hartman K."/>
            <person name="Hu X."/>
            <person name="Khan A.S."/>
            <person name="Lane L."/>
            <person name="Tilahun Y."/>
            <person name="Wright H."/>
        </authorList>
    </citation>
    <scope>NUCLEOTIDE SEQUENCE [LARGE SCALE GENOMIC DNA]</scope>
</reference>
<reference key="3">
    <citation type="submission" date="2005-07" db="EMBL/GenBank/DDBJ databases">
        <authorList>
            <person name="Mural R.J."/>
            <person name="Istrail S."/>
            <person name="Sutton G.G."/>
            <person name="Florea L."/>
            <person name="Halpern A.L."/>
            <person name="Mobarry C.M."/>
            <person name="Lippert R."/>
            <person name="Walenz B."/>
            <person name="Shatkay H."/>
            <person name="Dew I."/>
            <person name="Miller J.R."/>
            <person name="Flanigan M.J."/>
            <person name="Edwards N.J."/>
            <person name="Bolanos R."/>
            <person name="Fasulo D."/>
            <person name="Halldorsson B.V."/>
            <person name="Hannenhalli S."/>
            <person name="Turner R."/>
            <person name="Yooseph S."/>
            <person name="Lu F."/>
            <person name="Nusskern D.R."/>
            <person name="Shue B.C."/>
            <person name="Zheng X.H."/>
            <person name="Zhong F."/>
            <person name="Delcher A.L."/>
            <person name="Huson D.H."/>
            <person name="Kravitz S.A."/>
            <person name="Mouchard L."/>
            <person name="Reinert K."/>
            <person name="Remington K.A."/>
            <person name="Clark A.G."/>
            <person name="Waterman M.S."/>
            <person name="Eichler E.E."/>
            <person name="Adams M.D."/>
            <person name="Hunkapiller M.W."/>
            <person name="Myers E.W."/>
            <person name="Venter J.C."/>
        </authorList>
    </citation>
    <scope>NUCLEOTIDE SEQUENCE [LARGE SCALE GENOMIC DNA]</scope>
</reference>
<gene>
    <name type="primary">PRR34</name>
    <name type="synonym">C22orf26</name>
</gene>
<protein>
    <recommendedName>
        <fullName>Proline-rich protein 34</fullName>
    </recommendedName>
</protein>